<comment type="function">
    <text evidence="4">Sulfur-rich seed storage protein. This protein found in the seeds of many leguminous and non-leguminous plants is the source of sulfur-containing amino acids in seed meals.</text>
</comment>
<comment type="subunit">
    <text evidence="1 8">Hexamer; each subunit is composed of an acidic and a basic chain derived from a single precursor and linked by a disulfide bond (By similarity). Component of globulins complexes which accumulate in seeds (Probable).</text>
</comment>
<comment type="developmental stage">
    <text evidence="4">Accumulates during seed development.</text>
</comment>
<comment type="allergen">
    <text evidence="7">Causes an allergic reaction in human.</text>
</comment>
<comment type="similarity">
    <text evidence="6">Belongs to the 11S seed storage protein (globulins) family.</text>
</comment>
<comment type="sequence caution" evidence="6">
    <conflict type="erroneous initiation">
        <sequence resource="EMBL-CDS" id="ACN39600"/>
    </conflict>
    <text>Truncated N-terminus.</text>
</comment>
<reference key="1">
    <citation type="journal article" date="2011" name="BMC Plant Biol.">
        <title>Identification and characterisation of seed storage protein transcripts from Lupinus angustifolius.</title>
        <authorList>
            <person name="Foley R.C."/>
            <person name="Gao L.-L."/>
            <person name="Spriggs A."/>
            <person name="Soo L.Y.C."/>
            <person name="Goggin D.E."/>
            <person name="Smith P.M.C."/>
            <person name="Atkins C.A."/>
            <person name="Singh K.B."/>
        </authorList>
    </citation>
    <scope>NUCLEOTIDE SEQUENCE [MRNA]</scope>
    <scope>FUNCTION</scope>
    <scope>DEVELOPMENTAL STAGE</scope>
    <scope>ALLERGEN</scope>
    <source>
        <strain>cv. Tanjil</strain>
        <tissue>Seed</tissue>
    </source>
</reference>
<reference key="2">
    <citation type="journal article" date="2017" name="Plant Biotechnol. J.">
        <title>A comprehensive draft genome sequence for lupin (Lupinus angustifolius), an emerging health food: insights into plant-microbe interactions and legume evolution.</title>
        <authorList>
            <person name="Hane J.K."/>
            <person name="Ming Y."/>
            <person name="Kamphuis L.G."/>
            <person name="Nelson M.N."/>
            <person name="Garg G."/>
            <person name="Atkins C.A."/>
            <person name="Bayer P.E."/>
            <person name="Bravo A."/>
            <person name="Bringans S."/>
            <person name="Cannon S."/>
            <person name="Edwards D."/>
            <person name="Foley R."/>
            <person name="Gao L.L."/>
            <person name="Harrison M.J."/>
            <person name="Huang W."/>
            <person name="Hurgobin B."/>
            <person name="Li S."/>
            <person name="Liu C.W."/>
            <person name="McGrath A."/>
            <person name="Morahan G."/>
            <person name="Murray J."/>
            <person name="Weller J."/>
            <person name="Jian J."/>
            <person name="Singh K.B."/>
        </authorList>
    </citation>
    <scope>NUCLEOTIDE SEQUENCE [LARGE SCALE GENOMIC DNA]</scope>
    <source>
        <strain>cv. Tanjil</strain>
        <tissue>Seedling</tissue>
    </source>
</reference>
<reference key="3">
    <citation type="submission" date="2008-09" db="EMBL/GenBank/DDBJ databases">
        <title>Cloning of Lupinus angustifolius seed storage protein genes.</title>
        <authorList>
            <person name="Smith P.M."/>
            <person name="Goggin D.E."/>
            <person name="Cameron E.C."/>
        </authorList>
    </citation>
    <scope>NUCLEOTIDE SEQUENCE [MRNA] OF 57-585</scope>
    <source>
        <strain>cv. Merrit</strain>
    </source>
</reference>
<reference key="4">
    <citation type="journal article" date="2012" name="J. Agric. Food Chem.">
        <title>Release of flavonoids from lupin globulin proteins during digestion in a model system.</title>
        <authorList>
            <person name="Czubinski J."/>
            <person name="Dwiecki K."/>
            <person name="Siger A."/>
            <person name="Kachlicki P."/>
            <person name="Neunert G."/>
            <person name="Lampart-Szczapa E."/>
            <person name="Nogala-Kalucka M."/>
        </authorList>
    </citation>
    <scope>SUBUNIT</scope>
    <source>
        <strain>cv. Zeus</strain>
    </source>
</reference>
<accession>F5B8V8</accession>
<accession>C9WC98</accession>
<protein>
    <recommendedName>
        <fullName evidence="5">Conglutin alpha 3</fullName>
    </recommendedName>
    <allergenName evidence="6">Lup an alpha-conglutin</allergenName>
    <component>
        <recommendedName>
            <fullName evidence="1">Conglutin alpha 3A subunit</fullName>
        </recommendedName>
    </component>
    <component>
        <recommendedName>
            <fullName evidence="1">Conglutin alpha 3B subunit</fullName>
        </recommendedName>
    </component>
</protein>
<organism>
    <name type="scientific">Lupinus angustifolius</name>
    <name type="common">Narrow-leaved blue lupine</name>
    <dbReference type="NCBI Taxonomy" id="3871"/>
    <lineage>
        <taxon>Eukaryota</taxon>
        <taxon>Viridiplantae</taxon>
        <taxon>Streptophyta</taxon>
        <taxon>Embryophyta</taxon>
        <taxon>Tracheophyta</taxon>
        <taxon>Spermatophyta</taxon>
        <taxon>Magnoliopsida</taxon>
        <taxon>eudicotyledons</taxon>
        <taxon>Gunneridae</taxon>
        <taxon>Pentapetalae</taxon>
        <taxon>rosids</taxon>
        <taxon>fabids</taxon>
        <taxon>Fabales</taxon>
        <taxon>Fabaceae</taxon>
        <taxon>Papilionoideae</taxon>
        <taxon>50 kb inversion clade</taxon>
        <taxon>genistoids sensu lato</taxon>
        <taxon>core genistoids</taxon>
        <taxon>Genisteae</taxon>
        <taxon>Lupinus</taxon>
    </lineage>
</organism>
<proteinExistence type="evidence at protein level"/>
<name>CONA3_LUPAN</name>
<sequence length="585" mass="67381">MANPFLLSLSLCLVLLYTSACLGEGLDRFNECQLDRLNALEPDNRIESEGGVTETWNSNKPELRCAGVAFEKHTIEPKGLHLPSYTNYPQIIMIVQGEGALGISVPGCTETFEEAQQSQSRQERRRGQRSQSQEQEDSHQKIRHFREGDILVIPPGTPYWTYNYGDEQLVAINLLDTTSLSNQLDPNPRRFYLAGNPEEEYPETQQQRQQRQQHQRPSGRRHGQHQKEEEQEGKNNILSGFDPQFLSQALNIDEDTVHKLQNPNERIKQIIRVEEGLGVISPKWQEQEEEEEEKEEPRQRRRRERREEREEEEKEEEDEPRESRRHRGGHEEEEVEEERGRGRGGSEWKRTTRRRHTRGDEGQEEEETTTTTEERRRRRGGRGSRQEEEEEQSPPRSRNGLEETICTAILRENIADPTRADLYNPTAGRISTANSLTLPILGWFQLSAEYVNLYRNGIYAPHWNINANSVIYVIRGRGRVQVVNSQGNSVFNDDLRRGQLLVVPQNFVVAHQAGDEGFEFIAFKTNDQATTSPLKQVFRGIPAEVLANAFRLSLNQVSELKYNGNHNPLVTPQSQSQDHNLVKVA</sequence>
<feature type="signal peptide" evidence="2">
    <location>
        <begin position="1"/>
        <end position="23"/>
    </location>
</feature>
<feature type="chain" id="PRO_5010895108" description="Conglutin alpha 3">
    <location>
        <begin position="24"/>
        <end position="585"/>
    </location>
</feature>
<feature type="chain" id="PRO_0000446137" description="Conglutin alpha 3A subunit" evidence="1">
    <location>
        <begin position="24"/>
        <end position="399"/>
    </location>
</feature>
<feature type="chain" id="PRO_0000446138" description="Conglutin alpha 3B subunit" evidence="1">
    <location>
        <begin position="400"/>
        <end position="572"/>
    </location>
</feature>
<feature type="domain" description="Cupin type-1 1" evidence="2">
    <location>
        <begin position="37"/>
        <end position="258"/>
    </location>
</feature>
<feature type="domain" description="Cupin type-1 2" evidence="2">
    <location>
        <begin position="412"/>
        <end position="558"/>
    </location>
</feature>
<feature type="region of interest" description="Disordered" evidence="3">
    <location>
        <begin position="113"/>
        <end position="147"/>
    </location>
</feature>
<feature type="region of interest" description="Disordered" evidence="3">
    <location>
        <begin position="199"/>
        <end position="240"/>
    </location>
</feature>
<feature type="region of interest" description="Disordered" evidence="3">
    <location>
        <begin position="283"/>
        <end position="402"/>
    </location>
</feature>
<feature type="region of interest" description="Disordered" evidence="3">
    <location>
        <begin position="565"/>
        <end position="585"/>
    </location>
</feature>
<feature type="compositionally biased region" description="Basic and acidic residues" evidence="3">
    <location>
        <begin position="136"/>
        <end position="147"/>
    </location>
</feature>
<feature type="compositionally biased region" description="Basic residues" evidence="3">
    <location>
        <begin position="211"/>
        <end position="224"/>
    </location>
</feature>
<feature type="compositionally biased region" description="Acidic residues" evidence="3">
    <location>
        <begin position="309"/>
        <end position="320"/>
    </location>
</feature>
<feature type="compositionally biased region" description="Basic and acidic residues" evidence="3">
    <location>
        <begin position="338"/>
        <end position="350"/>
    </location>
</feature>
<feature type="compositionally biased region" description="Polar residues" evidence="3">
    <location>
        <begin position="565"/>
        <end position="579"/>
    </location>
</feature>
<feature type="disulfide bond" evidence="1">
    <location>
        <begin position="32"/>
        <end position="65"/>
    </location>
</feature>
<feature type="disulfide bond" description="Interchain (between A and B chains)" evidence="1">
    <location>
        <begin position="108"/>
        <end position="406"/>
    </location>
</feature>
<feature type="sequence conflict" description="In Ref. 3; ACN39600." evidence="6" ref="3">
    <original>Q</original>
    <variation>R</variation>
    <location>
        <position position="119"/>
    </location>
</feature>
<feature type="sequence conflict" description="In Ref. 3; ACN39600." evidence="6" ref="3">
    <original>Y</original>
    <variation>C</variation>
    <location>
        <position position="454"/>
    </location>
</feature>
<keyword id="KW-0020">Allergen</keyword>
<keyword id="KW-1015">Disulfide bond</keyword>
<keyword id="KW-1185">Reference proteome</keyword>
<keyword id="KW-0708">Seed storage protein</keyword>
<keyword id="KW-0732">Signal</keyword>
<keyword id="KW-0758">Storage protein</keyword>
<evidence type="ECO:0000250" key="1">
    <source>
        <dbReference type="UniProtKB" id="P04347"/>
    </source>
</evidence>
<evidence type="ECO:0000255" key="2"/>
<evidence type="ECO:0000256" key="3">
    <source>
        <dbReference type="SAM" id="MobiDB-lite"/>
    </source>
</evidence>
<evidence type="ECO:0000269" key="4">
    <source>
    </source>
</evidence>
<evidence type="ECO:0000303" key="5">
    <source>
    </source>
</evidence>
<evidence type="ECO:0000305" key="6"/>
<evidence type="ECO:0000305" key="7">
    <source>
    </source>
</evidence>
<evidence type="ECO:0000305" key="8">
    <source>
    </source>
</evidence>
<evidence type="ECO:0000312" key="9">
    <source>
        <dbReference type="EMBL" id="OIW01699.1"/>
    </source>
</evidence>
<dbReference type="EMBL" id="HQ670408">
    <property type="protein sequence ID" value="AEB33711.1"/>
    <property type="molecule type" value="mRNA"/>
</dbReference>
<dbReference type="EMBL" id="KV861864">
    <property type="protein sequence ID" value="OIW01699.1"/>
    <property type="molecule type" value="Genomic_DNA"/>
</dbReference>
<dbReference type="EMBL" id="CM007371">
    <property type="status" value="NOT_ANNOTATED_CDS"/>
    <property type="molecule type" value="Genomic_DNA"/>
</dbReference>
<dbReference type="EMBL" id="FJ263366">
    <property type="protein sequence ID" value="ACN39600.1"/>
    <property type="status" value="ALT_INIT"/>
    <property type="molecule type" value="mRNA"/>
</dbReference>
<dbReference type="RefSeq" id="XP_019462298.1">
    <property type="nucleotide sequence ID" value="XM_019606753.1"/>
</dbReference>
<dbReference type="SMR" id="F5B8V8"/>
<dbReference type="STRING" id="3871.F5B8V8"/>
<dbReference type="EnsemblPlants" id="OIW01699">
    <property type="protein sequence ID" value="OIW01699"/>
    <property type="gene ID" value="TanjilG_01206"/>
</dbReference>
<dbReference type="Gramene" id="OIW01699">
    <property type="protein sequence ID" value="OIW01699"/>
    <property type="gene ID" value="TanjilG_01206"/>
</dbReference>
<dbReference type="KEGG" id="lang:109361312"/>
<dbReference type="OMA" id="HESEDQQ"/>
<dbReference type="OrthoDB" id="1903982at2759"/>
<dbReference type="Proteomes" id="UP000188354">
    <property type="component" value="Chromosome LG11"/>
</dbReference>
<dbReference type="GO" id="GO:0045735">
    <property type="term" value="F:nutrient reservoir activity"/>
    <property type="evidence" value="ECO:0007669"/>
    <property type="project" value="UniProtKB-KW"/>
</dbReference>
<dbReference type="CDD" id="cd02243">
    <property type="entry name" value="cupin_11S_legumin_C"/>
    <property type="match status" value="1"/>
</dbReference>
<dbReference type="CDD" id="cd02242">
    <property type="entry name" value="cupin_11S_legumin_N"/>
    <property type="match status" value="1"/>
</dbReference>
<dbReference type="FunFam" id="2.60.120.10:FF:000073">
    <property type="entry name" value="Glycinin G1"/>
    <property type="match status" value="1"/>
</dbReference>
<dbReference type="Gene3D" id="2.60.120.10">
    <property type="entry name" value="Jelly Rolls"/>
    <property type="match status" value="2"/>
</dbReference>
<dbReference type="InterPro" id="IPR022379">
    <property type="entry name" value="11S_seedstore_CS"/>
</dbReference>
<dbReference type="InterPro" id="IPR006044">
    <property type="entry name" value="11S_seedstore_pln"/>
</dbReference>
<dbReference type="InterPro" id="IPR006045">
    <property type="entry name" value="Cupin_1"/>
</dbReference>
<dbReference type="InterPro" id="IPR014710">
    <property type="entry name" value="RmlC-like_jellyroll"/>
</dbReference>
<dbReference type="InterPro" id="IPR011051">
    <property type="entry name" value="RmlC_Cupin_sf"/>
</dbReference>
<dbReference type="InterPro" id="IPR050253">
    <property type="entry name" value="Seed_Storage-Functional"/>
</dbReference>
<dbReference type="PANTHER" id="PTHR31189:SF63">
    <property type="entry name" value="GLYCININ G5"/>
    <property type="match status" value="1"/>
</dbReference>
<dbReference type="PANTHER" id="PTHR31189">
    <property type="entry name" value="OS03G0336100 PROTEIN-RELATED"/>
    <property type="match status" value="1"/>
</dbReference>
<dbReference type="Pfam" id="PF00190">
    <property type="entry name" value="Cupin_1"/>
    <property type="match status" value="2"/>
</dbReference>
<dbReference type="PRINTS" id="PR00439">
    <property type="entry name" value="11SGLOBULIN"/>
</dbReference>
<dbReference type="SMART" id="SM00835">
    <property type="entry name" value="Cupin_1"/>
    <property type="match status" value="2"/>
</dbReference>
<dbReference type="SUPFAM" id="SSF51182">
    <property type="entry name" value="RmlC-like cupins"/>
    <property type="match status" value="1"/>
</dbReference>
<dbReference type="PROSITE" id="PS00305">
    <property type="entry name" value="11S_SEED_STORAGE"/>
    <property type="match status" value="1"/>
</dbReference>
<gene>
    <name evidence="9" type="ORF">TanjilG_01206</name>
</gene>